<accession>Q70Y28</accession>
<organism>
    <name type="scientific">Cyclopes didactylus</name>
    <name type="common">Silky anteater</name>
    <name type="synonym">Myrmecophaga didactyla</name>
    <dbReference type="NCBI Taxonomy" id="84074"/>
    <lineage>
        <taxon>Eukaryota</taxon>
        <taxon>Metazoa</taxon>
        <taxon>Chordata</taxon>
        <taxon>Craniata</taxon>
        <taxon>Vertebrata</taxon>
        <taxon>Euteleostomi</taxon>
        <taxon>Mammalia</taxon>
        <taxon>Eutheria</taxon>
        <taxon>Xenarthra</taxon>
        <taxon>Pilosa</taxon>
        <taxon>Vermilingua</taxon>
        <taxon>Cyclopedidae</taxon>
        <taxon>Cyclopes</taxon>
    </lineage>
</organism>
<name>NU1M_CYCDI</name>
<evidence type="ECO:0000250" key="1"/>
<evidence type="ECO:0000255" key="2"/>
<evidence type="ECO:0000305" key="3"/>
<gene>
    <name type="primary">MT-ND1</name>
    <name type="synonym">MTND1</name>
    <name type="synonym">NADH1</name>
    <name type="synonym">ND1</name>
</gene>
<protein>
    <recommendedName>
        <fullName>NADH-ubiquinone oxidoreductase chain 1</fullName>
        <ecNumber>7.1.1.2</ecNumber>
    </recommendedName>
    <alternativeName>
        <fullName>NADH dehydrogenase subunit 1</fullName>
    </alternativeName>
</protein>
<dbReference type="EC" id="7.1.1.2"/>
<dbReference type="EMBL" id="AJ505832">
    <property type="protein sequence ID" value="CAD44379.1"/>
    <property type="molecule type" value="Genomic_DNA"/>
</dbReference>
<dbReference type="SMR" id="Q70Y28"/>
<dbReference type="GO" id="GO:0005743">
    <property type="term" value="C:mitochondrial inner membrane"/>
    <property type="evidence" value="ECO:0007669"/>
    <property type="project" value="UniProtKB-SubCell"/>
</dbReference>
<dbReference type="GO" id="GO:0008137">
    <property type="term" value="F:NADH dehydrogenase (ubiquinone) activity"/>
    <property type="evidence" value="ECO:0007669"/>
    <property type="project" value="UniProtKB-EC"/>
</dbReference>
<dbReference type="GO" id="GO:0009060">
    <property type="term" value="P:aerobic respiration"/>
    <property type="evidence" value="ECO:0007669"/>
    <property type="project" value="TreeGrafter"/>
</dbReference>
<dbReference type="HAMAP" id="MF_01350">
    <property type="entry name" value="NDH1_NuoH"/>
    <property type="match status" value="1"/>
</dbReference>
<dbReference type="InterPro" id="IPR001694">
    <property type="entry name" value="NADH_UbQ_OxRdtase_su1/FPO"/>
</dbReference>
<dbReference type="InterPro" id="IPR018086">
    <property type="entry name" value="NADH_UbQ_OxRdtase_su1_CS"/>
</dbReference>
<dbReference type="PANTHER" id="PTHR11432">
    <property type="entry name" value="NADH DEHYDROGENASE SUBUNIT 1"/>
    <property type="match status" value="1"/>
</dbReference>
<dbReference type="PANTHER" id="PTHR11432:SF3">
    <property type="entry name" value="NADH-UBIQUINONE OXIDOREDUCTASE CHAIN 1"/>
    <property type="match status" value="1"/>
</dbReference>
<dbReference type="Pfam" id="PF00146">
    <property type="entry name" value="NADHdh"/>
    <property type="match status" value="1"/>
</dbReference>
<dbReference type="PROSITE" id="PS00667">
    <property type="entry name" value="COMPLEX1_ND1_1"/>
    <property type="match status" value="1"/>
</dbReference>
<dbReference type="PROSITE" id="PS00668">
    <property type="entry name" value="COMPLEX1_ND1_2"/>
    <property type="match status" value="1"/>
</dbReference>
<keyword id="KW-0249">Electron transport</keyword>
<keyword id="KW-0472">Membrane</keyword>
<keyword id="KW-0496">Mitochondrion</keyword>
<keyword id="KW-0999">Mitochondrion inner membrane</keyword>
<keyword id="KW-0520">NAD</keyword>
<keyword id="KW-0679">Respiratory chain</keyword>
<keyword id="KW-1278">Translocase</keyword>
<keyword id="KW-0812">Transmembrane</keyword>
<keyword id="KW-1133">Transmembrane helix</keyword>
<keyword id="KW-0813">Transport</keyword>
<keyword id="KW-0830">Ubiquinone</keyword>
<proteinExistence type="inferred from homology"/>
<comment type="function">
    <text evidence="1">Core subunit of the mitochondrial membrane respiratory chain NADH dehydrogenase (Complex I) that is believed to belong to the minimal assembly required for catalysis. Complex I functions in the transfer of electrons from NADH to the respiratory chain. The immediate electron acceptor for the enzyme is believed to be ubiquinone (By similarity).</text>
</comment>
<comment type="catalytic activity">
    <reaction>
        <text>a ubiquinone + NADH + 5 H(+)(in) = a ubiquinol + NAD(+) + 4 H(+)(out)</text>
        <dbReference type="Rhea" id="RHEA:29091"/>
        <dbReference type="Rhea" id="RHEA-COMP:9565"/>
        <dbReference type="Rhea" id="RHEA-COMP:9566"/>
        <dbReference type="ChEBI" id="CHEBI:15378"/>
        <dbReference type="ChEBI" id="CHEBI:16389"/>
        <dbReference type="ChEBI" id="CHEBI:17976"/>
        <dbReference type="ChEBI" id="CHEBI:57540"/>
        <dbReference type="ChEBI" id="CHEBI:57945"/>
        <dbReference type="EC" id="7.1.1.2"/>
    </reaction>
</comment>
<comment type="subcellular location">
    <subcellularLocation>
        <location evidence="1">Mitochondrion inner membrane</location>
        <topology evidence="1">Multi-pass membrane protein</topology>
    </subcellularLocation>
</comment>
<comment type="similarity">
    <text evidence="3">Belongs to the complex I subunit 1 family.</text>
</comment>
<reference key="1">
    <citation type="journal article" date="2003" name="Mol. Phylogenet. Evol.">
        <title>Molecular systematics of armadillos (Xenarthra, Dasypodidae): contribution of maximum likelihood and Bayesian analyses of mitochondrial and nuclear genes.</title>
        <authorList>
            <person name="Delsuc F."/>
            <person name="Stanhope M.J."/>
            <person name="Douzery E.J."/>
        </authorList>
    </citation>
    <scope>NUCLEOTIDE SEQUENCE [GENOMIC DNA]</scope>
</reference>
<geneLocation type="mitochondrion"/>
<feature type="chain" id="PRO_0000117376" description="NADH-ubiquinone oxidoreductase chain 1">
    <location>
        <begin position="1"/>
        <end position="318"/>
    </location>
</feature>
<feature type="transmembrane region" description="Helical" evidence="2">
    <location>
        <begin position="2"/>
        <end position="22"/>
    </location>
</feature>
<feature type="transmembrane region" description="Helical" evidence="2">
    <location>
        <begin position="36"/>
        <end position="56"/>
    </location>
</feature>
<feature type="transmembrane region" description="Helical" evidence="2">
    <location>
        <begin position="69"/>
        <end position="89"/>
    </location>
</feature>
<feature type="transmembrane region" description="Helical" evidence="2">
    <location>
        <begin position="100"/>
        <end position="120"/>
    </location>
</feature>
<feature type="transmembrane region" description="Helical" evidence="2">
    <location>
        <begin position="130"/>
        <end position="152"/>
    </location>
</feature>
<feature type="transmembrane region" description="Helical" evidence="2">
    <location>
        <begin position="171"/>
        <end position="191"/>
    </location>
</feature>
<feature type="transmembrane region" description="Helical" evidence="2">
    <location>
        <begin position="217"/>
        <end position="237"/>
    </location>
</feature>
<feature type="transmembrane region" description="Helical" evidence="2">
    <location>
        <begin position="254"/>
        <end position="273"/>
    </location>
</feature>
<feature type="transmembrane region" description="Helical" evidence="2">
    <location>
        <begin position="294"/>
        <end position="314"/>
    </location>
</feature>
<sequence>MFLTNISCLIIPILLAVAFLTLVERKILGYMQLRKGPNIVGPYGLLQPIADAIKLFTKEPLRPLTSSKLLFTIAPTLALSLALTLWIPLPMPHPLANLNLGMLFILAMSSLAVYSILWSGWASNSKYALIGALRAVAQTISYEVTLAIILLHSNLFSGSYSLSSLITTQEHIWLIIPSWPLTMMWFISTLAETNRAPFDLTEGESELVSGFNVEYAAGPFALFFLAEYANIMMMNALTTTIFLGPTYNPTFPELYSTNFMLKTTMLTISFLWIRASYPRFRYDQLMHLLWKNFLPLTLALCMWHTSLLISLTSIPPQT</sequence>